<evidence type="ECO:0000255" key="1">
    <source>
        <dbReference type="HAMAP-Rule" id="MF_03141"/>
    </source>
</evidence>
<evidence type="ECO:0000305" key="2"/>
<feature type="chain" id="PRO_0000405039" description="Lissencephaly-1 homolog">
    <location>
        <begin position="1"/>
        <end position="409"/>
    </location>
</feature>
<feature type="domain" description="LisH" evidence="1">
    <location>
        <begin position="7"/>
        <end position="39"/>
    </location>
</feature>
<feature type="repeat" description="WD 1">
    <location>
        <begin position="104"/>
        <end position="145"/>
    </location>
</feature>
<feature type="repeat" description="WD 2">
    <location>
        <begin position="146"/>
        <end position="185"/>
    </location>
</feature>
<feature type="repeat" description="WD 3">
    <location>
        <begin position="189"/>
        <end position="228"/>
    </location>
</feature>
<feature type="repeat" description="WD 4">
    <location>
        <begin position="231"/>
        <end position="270"/>
    </location>
</feature>
<feature type="repeat" description="WD 5">
    <location>
        <begin position="273"/>
        <end position="332"/>
    </location>
</feature>
<feature type="repeat" description="WD 6">
    <location>
        <begin position="335"/>
        <end position="374"/>
    </location>
</feature>
<feature type="repeat" description="WD 7">
    <location>
        <begin position="377"/>
        <end position="409"/>
    </location>
</feature>
<feature type="coiled-coil region" evidence="1">
    <location>
        <begin position="54"/>
        <end position="81"/>
    </location>
</feature>
<proteinExistence type="inferred from homology"/>
<protein>
    <recommendedName>
        <fullName evidence="1">Lissencephaly-1 homolog</fullName>
    </recommendedName>
</protein>
<dbReference type="EMBL" id="CH477201">
    <property type="protein sequence ID" value="EAT48185.1"/>
    <property type="status" value="ALT_SEQ"/>
    <property type="molecule type" value="Genomic_DNA"/>
</dbReference>
<dbReference type="RefSeq" id="XP_001651009.1">
    <property type="nucleotide sequence ID" value="XM_001650959.1"/>
</dbReference>
<dbReference type="SMR" id="Q17N69"/>
<dbReference type="FunCoup" id="Q17N69">
    <property type="interactions" value="1949"/>
</dbReference>
<dbReference type="STRING" id="7159.Q17N69"/>
<dbReference type="PaxDb" id="7159-AAEL000770-PA"/>
<dbReference type="VEuPathDB" id="VectorBase:AAEL000770"/>
<dbReference type="eggNOG" id="KOG0295">
    <property type="taxonomic scope" value="Eukaryota"/>
</dbReference>
<dbReference type="HOGENOM" id="CLU_000288_57_15_1"/>
<dbReference type="InParanoid" id="Q17N69"/>
<dbReference type="Proteomes" id="UP000008820">
    <property type="component" value="Unassembled WGS sequence"/>
</dbReference>
<dbReference type="Proteomes" id="UP000682892">
    <property type="component" value="Unassembled WGS sequence"/>
</dbReference>
<dbReference type="GO" id="GO:0005813">
    <property type="term" value="C:centrosome"/>
    <property type="evidence" value="ECO:0007669"/>
    <property type="project" value="UniProtKB-SubCell"/>
</dbReference>
<dbReference type="GO" id="GO:0005737">
    <property type="term" value="C:cytoplasm"/>
    <property type="evidence" value="ECO:0007669"/>
    <property type="project" value="UniProtKB-UniRule"/>
</dbReference>
<dbReference type="GO" id="GO:0005874">
    <property type="term" value="C:microtubule"/>
    <property type="evidence" value="ECO:0007669"/>
    <property type="project" value="UniProtKB-KW"/>
</dbReference>
<dbReference type="GO" id="GO:0005875">
    <property type="term" value="C:microtubule associated complex"/>
    <property type="evidence" value="ECO:0007669"/>
    <property type="project" value="UniProtKB-UniRule"/>
</dbReference>
<dbReference type="GO" id="GO:0070840">
    <property type="term" value="F:dynein complex binding"/>
    <property type="evidence" value="ECO:0007669"/>
    <property type="project" value="UniProtKB-UniRule"/>
</dbReference>
<dbReference type="GO" id="GO:0051301">
    <property type="term" value="P:cell division"/>
    <property type="evidence" value="ECO:0007669"/>
    <property type="project" value="UniProtKB-KW"/>
</dbReference>
<dbReference type="GO" id="GO:0000132">
    <property type="term" value="P:establishment of mitotic spindle orientation"/>
    <property type="evidence" value="ECO:0007669"/>
    <property type="project" value="UniProtKB-UniRule"/>
</dbReference>
<dbReference type="GO" id="GO:0051012">
    <property type="term" value="P:microtubule sliding"/>
    <property type="evidence" value="ECO:0007669"/>
    <property type="project" value="UniProtKB-UniRule"/>
</dbReference>
<dbReference type="CDD" id="cd00200">
    <property type="entry name" value="WD40"/>
    <property type="match status" value="1"/>
</dbReference>
<dbReference type="FunFam" id="2.130.10.10:FF:000038">
    <property type="entry name" value="Lissencephaly-1 homolog B"/>
    <property type="match status" value="1"/>
</dbReference>
<dbReference type="FunFam" id="1.20.960.30:FF:000002">
    <property type="entry name" value="Platelet-activating factor acetylhydrolase ib"/>
    <property type="match status" value="1"/>
</dbReference>
<dbReference type="Gene3D" id="1.20.960.30">
    <property type="match status" value="1"/>
</dbReference>
<dbReference type="Gene3D" id="2.130.10.10">
    <property type="entry name" value="YVTN repeat-like/Quinoprotein amine dehydrogenase"/>
    <property type="match status" value="1"/>
</dbReference>
<dbReference type="HAMAP" id="MF_03141">
    <property type="entry name" value="lis1"/>
    <property type="match status" value="1"/>
</dbReference>
<dbReference type="InterPro" id="IPR017252">
    <property type="entry name" value="Dynein_regulator_LIS1"/>
</dbReference>
<dbReference type="InterPro" id="IPR020472">
    <property type="entry name" value="G-protein_beta_WD-40_rep"/>
</dbReference>
<dbReference type="InterPro" id="IPR037190">
    <property type="entry name" value="LIS1_N"/>
</dbReference>
<dbReference type="InterPro" id="IPR006594">
    <property type="entry name" value="LisH"/>
</dbReference>
<dbReference type="InterPro" id="IPR056795">
    <property type="entry name" value="PAC1-like_LisH-like_dom"/>
</dbReference>
<dbReference type="InterPro" id="IPR015943">
    <property type="entry name" value="WD40/YVTN_repeat-like_dom_sf"/>
</dbReference>
<dbReference type="InterPro" id="IPR019775">
    <property type="entry name" value="WD40_repeat_CS"/>
</dbReference>
<dbReference type="InterPro" id="IPR036322">
    <property type="entry name" value="WD40_repeat_dom_sf"/>
</dbReference>
<dbReference type="InterPro" id="IPR001680">
    <property type="entry name" value="WD40_rpt"/>
</dbReference>
<dbReference type="InterPro" id="IPR050349">
    <property type="entry name" value="WD_LIS1/nudF_dynein_reg"/>
</dbReference>
<dbReference type="PANTHER" id="PTHR44129">
    <property type="entry name" value="WD REPEAT-CONTAINING PROTEIN POP1"/>
    <property type="match status" value="1"/>
</dbReference>
<dbReference type="Pfam" id="PF24951">
    <property type="entry name" value="LisH_PAC1"/>
    <property type="match status" value="1"/>
</dbReference>
<dbReference type="Pfam" id="PF00400">
    <property type="entry name" value="WD40"/>
    <property type="match status" value="7"/>
</dbReference>
<dbReference type="PIRSF" id="PIRSF037647">
    <property type="entry name" value="Dynein_regulator_Lis1"/>
    <property type="match status" value="1"/>
</dbReference>
<dbReference type="PRINTS" id="PR00320">
    <property type="entry name" value="GPROTEINBRPT"/>
</dbReference>
<dbReference type="SMART" id="SM00667">
    <property type="entry name" value="LisH"/>
    <property type="match status" value="1"/>
</dbReference>
<dbReference type="SMART" id="SM00320">
    <property type="entry name" value="WD40"/>
    <property type="match status" value="7"/>
</dbReference>
<dbReference type="SUPFAM" id="SSF109925">
    <property type="entry name" value="Lissencephaly-1 protein (Lis-1, PAF-AH alpha) N-terminal domain"/>
    <property type="match status" value="1"/>
</dbReference>
<dbReference type="SUPFAM" id="SSF50978">
    <property type="entry name" value="WD40 repeat-like"/>
    <property type="match status" value="1"/>
</dbReference>
<dbReference type="PROSITE" id="PS50896">
    <property type="entry name" value="LISH"/>
    <property type="match status" value="1"/>
</dbReference>
<dbReference type="PROSITE" id="PS00678">
    <property type="entry name" value="WD_REPEATS_1"/>
    <property type="match status" value="6"/>
</dbReference>
<dbReference type="PROSITE" id="PS50082">
    <property type="entry name" value="WD_REPEATS_2"/>
    <property type="match status" value="7"/>
</dbReference>
<dbReference type="PROSITE" id="PS50294">
    <property type="entry name" value="WD_REPEATS_REGION"/>
    <property type="match status" value="1"/>
</dbReference>
<accession>Q17N69</accession>
<comment type="function">
    <text evidence="1">Positively regulates the activity of the minus-end directed microtubule motor protein dynein. May enhance dynein-mediated microtubule sliding by targeting dynein to the microtubule plus end. Required for several dynein- and microtubule-dependent processes.</text>
</comment>
<comment type="subcellular location">
    <subcellularLocation>
        <location evidence="1">Cytoplasm</location>
        <location evidence="1">Cytoskeleton</location>
    </subcellularLocation>
    <subcellularLocation>
        <location evidence="1">Cytoplasm</location>
        <location evidence="1">Cytoskeleton</location>
        <location evidence="1">Microtubule organizing center</location>
        <location evidence="1">Centrosome</location>
    </subcellularLocation>
    <text evidence="1">Localizes to the plus end of microtubules and to the centrosome.</text>
</comment>
<comment type="domain">
    <text evidence="1">Dimerization mediated by the LisH domain may be required to activate dynein.</text>
</comment>
<comment type="similarity">
    <text evidence="1">Belongs to the WD repeat LIS1/nudF family.</text>
</comment>
<comment type="sequence caution" evidence="2">
    <conflict type="erroneous initiation">
        <sequence resource="EMBL-CDS" id="EAT48185"/>
    </conflict>
    <text>Extended N-terminus.</text>
</comment>
<organism>
    <name type="scientific">Aedes aegypti</name>
    <name type="common">Yellowfever mosquito</name>
    <name type="synonym">Culex aegypti</name>
    <dbReference type="NCBI Taxonomy" id="7159"/>
    <lineage>
        <taxon>Eukaryota</taxon>
        <taxon>Metazoa</taxon>
        <taxon>Ecdysozoa</taxon>
        <taxon>Arthropoda</taxon>
        <taxon>Hexapoda</taxon>
        <taxon>Insecta</taxon>
        <taxon>Pterygota</taxon>
        <taxon>Neoptera</taxon>
        <taxon>Endopterygota</taxon>
        <taxon>Diptera</taxon>
        <taxon>Nematocera</taxon>
        <taxon>Culicoidea</taxon>
        <taxon>Culicidae</taxon>
        <taxon>Culicinae</taxon>
        <taxon>Aedini</taxon>
        <taxon>Aedes</taxon>
        <taxon>Stegomyia</taxon>
    </lineage>
</organism>
<reference key="1">
    <citation type="journal article" date="2007" name="Science">
        <title>Genome sequence of Aedes aegypti, a major arbovirus vector.</title>
        <authorList>
            <person name="Nene V."/>
            <person name="Wortman J.R."/>
            <person name="Lawson D."/>
            <person name="Haas B.J."/>
            <person name="Kodira C.D."/>
            <person name="Tu Z.J."/>
            <person name="Loftus B.J."/>
            <person name="Xi Z."/>
            <person name="Megy K."/>
            <person name="Grabherr M."/>
            <person name="Ren Q."/>
            <person name="Zdobnov E.M."/>
            <person name="Lobo N.F."/>
            <person name="Campbell K.S."/>
            <person name="Brown S.E."/>
            <person name="Bonaldo M.F."/>
            <person name="Zhu J."/>
            <person name="Sinkins S.P."/>
            <person name="Hogenkamp D.G."/>
            <person name="Amedeo P."/>
            <person name="Arensburger P."/>
            <person name="Atkinson P.W."/>
            <person name="Bidwell S.L."/>
            <person name="Biedler J."/>
            <person name="Birney E."/>
            <person name="Bruggner R.V."/>
            <person name="Costas J."/>
            <person name="Coy M.R."/>
            <person name="Crabtree J."/>
            <person name="Crawford M."/>
            <person name="DeBruyn B."/>
            <person name="DeCaprio D."/>
            <person name="Eiglmeier K."/>
            <person name="Eisenstadt E."/>
            <person name="El-Dorry H."/>
            <person name="Gelbart W.M."/>
            <person name="Gomes S.L."/>
            <person name="Hammond M."/>
            <person name="Hannick L.I."/>
            <person name="Hogan J.R."/>
            <person name="Holmes M.H."/>
            <person name="Jaffe D."/>
            <person name="Johnston S.J."/>
            <person name="Kennedy R.C."/>
            <person name="Koo H."/>
            <person name="Kravitz S."/>
            <person name="Kriventseva E.V."/>
            <person name="Kulp D."/>
            <person name="Labutti K."/>
            <person name="Lee E."/>
            <person name="Li S."/>
            <person name="Lovin D.D."/>
            <person name="Mao C."/>
            <person name="Mauceli E."/>
            <person name="Menck C.F."/>
            <person name="Miller J.R."/>
            <person name="Montgomery P."/>
            <person name="Mori A."/>
            <person name="Nascimento A.L."/>
            <person name="Naveira H.F."/>
            <person name="Nusbaum C."/>
            <person name="O'Leary S.B."/>
            <person name="Orvis J."/>
            <person name="Pertea M."/>
            <person name="Quesneville H."/>
            <person name="Reidenbach K.R."/>
            <person name="Rogers Y.-H.C."/>
            <person name="Roth C.W."/>
            <person name="Schneider J.R."/>
            <person name="Schatz M."/>
            <person name="Shumway M."/>
            <person name="Stanke M."/>
            <person name="Stinson E.O."/>
            <person name="Tubio J.M.C."/>
            <person name="Vanzee J.P."/>
            <person name="Verjovski-Almeida S."/>
            <person name="Werner D."/>
            <person name="White O.R."/>
            <person name="Wyder S."/>
            <person name="Zeng Q."/>
            <person name="Zhao Q."/>
            <person name="Zhao Y."/>
            <person name="Hill C.A."/>
            <person name="Raikhel A.S."/>
            <person name="Soares M.B."/>
            <person name="Knudson D.L."/>
            <person name="Lee N.H."/>
            <person name="Galagan J."/>
            <person name="Salzberg S.L."/>
            <person name="Paulsen I.T."/>
            <person name="Dimopoulos G."/>
            <person name="Collins F.H."/>
            <person name="Bruce B."/>
            <person name="Fraser-Liggett C.M."/>
            <person name="Severson D.W."/>
        </authorList>
    </citation>
    <scope>NUCLEOTIDE SEQUENCE [LARGE SCALE GENOMIC DNA]</scope>
    <source>
        <strain>LVPib12</strain>
    </source>
</reference>
<sequence>MYVRRLRRERSNQAIADYLGSNGYTDALEAFRKEADMPNEIERKYGGLLEKKWTSVIRLQKKVMELEAKLSEAEKEAIEGAPTKAKRTPTDWIPRPPEKFALAGHRATVTRVVFHPVFSMMASASEDATIKIWDFETGEYERTLKGHTDSVQDLAFDSHGKLLASCSSDLSIKLWDFQQTFECVKTMHGHDHNVSSVSFVPAGDYLLSASRDKTIKMWEVATGYCVKTFTGHREWVRMVRVNVDGSLMASCSNDHSVRVWQTNSKECKAELREHENTVECIAWAPESAAAAINEAAGADNKKGAHQGPFLASGSRDKTIRVWDVNSGLCLFTLVGHDNWVRGIVFHPGGKYMLSASDDKTLRIWDLRNKRCMKTLYAHSHFCTSLDMHKSHPYVISGSVDTTVKVWECR</sequence>
<name>LIS1_AEDAE</name>
<keyword id="KW-0131">Cell cycle</keyword>
<keyword id="KW-0132">Cell division</keyword>
<keyword id="KW-0175">Coiled coil</keyword>
<keyword id="KW-0963">Cytoplasm</keyword>
<keyword id="KW-0206">Cytoskeleton</keyword>
<keyword id="KW-0493">Microtubule</keyword>
<keyword id="KW-0498">Mitosis</keyword>
<keyword id="KW-1185">Reference proteome</keyword>
<keyword id="KW-0677">Repeat</keyword>
<keyword id="KW-0813">Transport</keyword>
<keyword id="KW-0853">WD repeat</keyword>
<gene>
    <name type="ORF">AAEL000770</name>
</gene>